<sequence>MHFTLFLYFDAIRHANQRRWCHECTIKIFRRSFDIARHTVHLCVRKIFSLHPLTETDFLPNELRSEEDQTLIGIFWFLPPIIEGEDERSRFPRRSMSENHLIITKKSLHNVASKDYIRGSHVPCFQPYEDVYELNIEE</sequence>
<dbReference type="EMBL" id="CU329672">
    <property type="protein sequence ID" value="CAA21783.1"/>
    <property type="molecule type" value="Genomic_DNA"/>
</dbReference>
<dbReference type="PIR" id="T40963">
    <property type="entry name" value="T40963"/>
</dbReference>
<dbReference type="RefSeq" id="NP_588245.1">
    <property type="nucleotide sequence ID" value="NM_001023235.2"/>
</dbReference>
<dbReference type="BioGRID" id="275300">
    <property type="interactions" value="4"/>
</dbReference>
<dbReference type="PaxDb" id="4896-SPCC13B11.02c.1"/>
<dbReference type="EnsemblFungi" id="SPCC13B11.02c.1">
    <property type="protein sequence ID" value="SPCC13B11.02c.1:pep"/>
    <property type="gene ID" value="SPCC13B11.02c"/>
</dbReference>
<dbReference type="PomBase" id="SPCC13B11.02c"/>
<dbReference type="VEuPathDB" id="FungiDB:SPCC13B11.02c"/>
<dbReference type="HOGENOM" id="CLU_1856461_0_0_1"/>
<dbReference type="InParanoid" id="O94249"/>
<dbReference type="PRO" id="PR:O94249"/>
<dbReference type="Proteomes" id="UP000002485">
    <property type="component" value="Chromosome III"/>
</dbReference>
<organism>
    <name type="scientific">Schizosaccharomyces pombe (strain 972 / ATCC 24843)</name>
    <name type="common">Fission yeast</name>
    <dbReference type="NCBI Taxonomy" id="284812"/>
    <lineage>
        <taxon>Eukaryota</taxon>
        <taxon>Fungi</taxon>
        <taxon>Dikarya</taxon>
        <taxon>Ascomycota</taxon>
        <taxon>Taphrinomycotina</taxon>
        <taxon>Schizosaccharomycetes</taxon>
        <taxon>Schizosaccharomycetales</taxon>
        <taxon>Schizosaccharomycetaceae</taxon>
        <taxon>Schizosaccharomyces</taxon>
    </lineage>
</organism>
<protein>
    <recommendedName>
        <fullName>Uncharacterized protein C13B11.02c</fullName>
    </recommendedName>
</protein>
<keyword id="KW-1185">Reference proteome</keyword>
<proteinExistence type="predicted"/>
<reference key="1">
    <citation type="journal article" date="2002" name="Nature">
        <title>The genome sequence of Schizosaccharomyces pombe.</title>
        <authorList>
            <person name="Wood V."/>
            <person name="Gwilliam R."/>
            <person name="Rajandream M.A."/>
            <person name="Lyne M.H."/>
            <person name="Lyne R."/>
            <person name="Stewart A."/>
            <person name="Sgouros J.G."/>
            <person name="Peat N."/>
            <person name="Hayles J."/>
            <person name="Baker S.G."/>
            <person name="Basham D."/>
            <person name="Bowman S."/>
            <person name="Brooks K."/>
            <person name="Brown D."/>
            <person name="Brown S."/>
            <person name="Chillingworth T."/>
            <person name="Churcher C.M."/>
            <person name="Collins M."/>
            <person name="Connor R."/>
            <person name="Cronin A."/>
            <person name="Davis P."/>
            <person name="Feltwell T."/>
            <person name="Fraser A."/>
            <person name="Gentles S."/>
            <person name="Goble A."/>
            <person name="Hamlin N."/>
            <person name="Harris D.E."/>
            <person name="Hidalgo J."/>
            <person name="Hodgson G."/>
            <person name="Holroyd S."/>
            <person name="Hornsby T."/>
            <person name="Howarth S."/>
            <person name="Huckle E.J."/>
            <person name="Hunt S."/>
            <person name="Jagels K."/>
            <person name="James K.D."/>
            <person name="Jones L."/>
            <person name="Jones M."/>
            <person name="Leather S."/>
            <person name="McDonald S."/>
            <person name="McLean J."/>
            <person name="Mooney P."/>
            <person name="Moule S."/>
            <person name="Mungall K.L."/>
            <person name="Murphy L.D."/>
            <person name="Niblett D."/>
            <person name="Odell C."/>
            <person name="Oliver K."/>
            <person name="O'Neil S."/>
            <person name="Pearson D."/>
            <person name="Quail M.A."/>
            <person name="Rabbinowitsch E."/>
            <person name="Rutherford K.M."/>
            <person name="Rutter S."/>
            <person name="Saunders D."/>
            <person name="Seeger K."/>
            <person name="Sharp S."/>
            <person name="Skelton J."/>
            <person name="Simmonds M.N."/>
            <person name="Squares R."/>
            <person name="Squares S."/>
            <person name="Stevens K."/>
            <person name="Taylor K."/>
            <person name="Taylor R.G."/>
            <person name="Tivey A."/>
            <person name="Walsh S.V."/>
            <person name="Warren T."/>
            <person name="Whitehead S."/>
            <person name="Woodward J.R."/>
            <person name="Volckaert G."/>
            <person name="Aert R."/>
            <person name="Robben J."/>
            <person name="Grymonprez B."/>
            <person name="Weltjens I."/>
            <person name="Vanstreels E."/>
            <person name="Rieger M."/>
            <person name="Schaefer M."/>
            <person name="Mueller-Auer S."/>
            <person name="Gabel C."/>
            <person name="Fuchs M."/>
            <person name="Duesterhoeft A."/>
            <person name="Fritzc C."/>
            <person name="Holzer E."/>
            <person name="Moestl D."/>
            <person name="Hilbert H."/>
            <person name="Borzym K."/>
            <person name="Langer I."/>
            <person name="Beck A."/>
            <person name="Lehrach H."/>
            <person name="Reinhardt R."/>
            <person name="Pohl T.M."/>
            <person name="Eger P."/>
            <person name="Zimmermann W."/>
            <person name="Wedler H."/>
            <person name="Wambutt R."/>
            <person name="Purnelle B."/>
            <person name="Goffeau A."/>
            <person name="Cadieu E."/>
            <person name="Dreano S."/>
            <person name="Gloux S."/>
            <person name="Lelaure V."/>
            <person name="Mottier S."/>
            <person name="Galibert F."/>
            <person name="Aves S.J."/>
            <person name="Xiang Z."/>
            <person name="Hunt C."/>
            <person name="Moore K."/>
            <person name="Hurst S.M."/>
            <person name="Lucas M."/>
            <person name="Rochet M."/>
            <person name="Gaillardin C."/>
            <person name="Tallada V.A."/>
            <person name="Garzon A."/>
            <person name="Thode G."/>
            <person name="Daga R.R."/>
            <person name="Cruzado L."/>
            <person name="Jimenez J."/>
            <person name="Sanchez M."/>
            <person name="del Rey F."/>
            <person name="Benito J."/>
            <person name="Dominguez A."/>
            <person name="Revuelta J.L."/>
            <person name="Moreno S."/>
            <person name="Armstrong J."/>
            <person name="Forsburg S.L."/>
            <person name="Cerutti L."/>
            <person name="Lowe T."/>
            <person name="McCombie W.R."/>
            <person name="Paulsen I."/>
            <person name="Potashkin J."/>
            <person name="Shpakovski G.V."/>
            <person name="Ussery D."/>
            <person name="Barrell B.G."/>
            <person name="Nurse P."/>
        </authorList>
    </citation>
    <scope>NUCLEOTIDE SEQUENCE [LARGE SCALE GENOMIC DNA]</scope>
    <source>
        <strain>972 / ATCC 24843</strain>
    </source>
</reference>
<gene>
    <name type="ORF">SPCC13B11.02c</name>
</gene>
<accession>O94249</accession>
<name>YCM2_SCHPO</name>
<feature type="chain" id="PRO_0000116552" description="Uncharacterized protein C13B11.02c">
    <location>
        <begin position="1"/>
        <end position="138"/>
    </location>
</feature>